<protein>
    <recommendedName>
        <fullName>E3 ubiquitin-protein ligase complex SLX5-SLX8 subunit SLX8</fullName>
        <ecNumber evidence="9">2.3.2.27</ecNumber>
    </recommendedName>
    <alternativeName>
        <fullName evidence="17">RING-type E3 ubiquitin transferase SLX8</fullName>
    </alternativeName>
    <alternativeName>
        <fullName>Synthetic lethal of unknown function protein 8</fullName>
    </alternativeName>
</protein>
<reference key="1">
    <citation type="journal article" date="1997" name="Nature">
        <title>The nucleotide sequence of Saccharomyces cerevisiae chromosome V.</title>
        <authorList>
            <person name="Dietrich F.S."/>
            <person name="Mulligan J.T."/>
            <person name="Hennessy K.M."/>
            <person name="Yelton M.A."/>
            <person name="Allen E."/>
            <person name="Araujo R."/>
            <person name="Aviles E."/>
            <person name="Berno A."/>
            <person name="Brennan T."/>
            <person name="Carpenter J."/>
            <person name="Chen E."/>
            <person name="Cherry J.M."/>
            <person name="Chung E."/>
            <person name="Duncan M."/>
            <person name="Guzman E."/>
            <person name="Hartzell G."/>
            <person name="Hunicke-Smith S."/>
            <person name="Hyman R.W."/>
            <person name="Kayser A."/>
            <person name="Komp C."/>
            <person name="Lashkari D."/>
            <person name="Lew H."/>
            <person name="Lin D."/>
            <person name="Mosedale D."/>
            <person name="Nakahara K."/>
            <person name="Namath A."/>
            <person name="Norgren R."/>
            <person name="Oefner P."/>
            <person name="Oh C."/>
            <person name="Petel F.X."/>
            <person name="Roberts D."/>
            <person name="Sehl P."/>
            <person name="Schramm S."/>
            <person name="Shogren T."/>
            <person name="Smith V."/>
            <person name="Taylor P."/>
            <person name="Wei Y."/>
            <person name="Botstein D."/>
            <person name="Davis R.W."/>
        </authorList>
    </citation>
    <scope>NUCLEOTIDE SEQUENCE [LARGE SCALE GENOMIC DNA]</scope>
    <source>
        <strain>ATCC 204508 / S288c</strain>
    </source>
</reference>
<reference key="2">
    <citation type="journal article" date="2014" name="G3 (Bethesda)">
        <title>The reference genome sequence of Saccharomyces cerevisiae: Then and now.</title>
        <authorList>
            <person name="Engel S.R."/>
            <person name="Dietrich F.S."/>
            <person name="Fisk D.G."/>
            <person name="Binkley G."/>
            <person name="Balakrishnan R."/>
            <person name="Costanzo M.C."/>
            <person name="Dwight S.S."/>
            <person name="Hitz B.C."/>
            <person name="Karra K."/>
            <person name="Nash R.S."/>
            <person name="Weng S."/>
            <person name="Wong E.D."/>
            <person name="Lloyd P."/>
            <person name="Skrzypek M.S."/>
            <person name="Miyasato S.R."/>
            <person name="Simison M."/>
            <person name="Cherry J.M."/>
        </authorList>
    </citation>
    <scope>GENOME REANNOTATION</scope>
    <source>
        <strain>ATCC 204508 / S288c</strain>
    </source>
</reference>
<reference key="3">
    <citation type="journal article" date="2001" name="Genetics">
        <title>Requirement for three novel protein complexes in the absence of the Sgs1 DNA helicase in Saccharomyces cerevisiae.</title>
        <authorList>
            <person name="Mullen J.R."/>
            <person name="Kaliraman V."/>
            <person name="Ibrahim S.S."/>
            <person name="Brill S.J."/>
        </authorList>
    </citation>
    <scope>FUNCTION IN DEGRADATION OF SUMOYLATED PROTEINS</scope>
    <scope>INTERACTION WITH SLX5</scope>
</reference>
<reference key="4">
    <citation type="journal article" date="2006" name="DNA Repair">
        <title>Suppression of genomic instability by SLX5 and SLX8 in Saccharomyces cerevisiae.</title>
        <authorList>
            <person name="Zhang C."/>
            <person name="Roberts T.M."/>
            <person name="Yang J."/>
            <person name="Desai R."/>
            <person name="Brown G.W."/>
        </authorList>
    </citation>
    <scope>FUNCTION IN STABILIZATION OF DNA DAMAGE</scope>
</reference>
<reference key="5">
    <citation type="journal article" date="2006" name="Genetics">
        <title>Genetic analysis connects SLX5 and SLX8 to the SUMO pathway in Saccharomyces cerevisiae.</title>
        <authorList>
            <person name="Wang Z."/>
            <person name="Jones G.M."/>
            <person name="Prelich G."/>
        </authorList>
    </citation>
    <scope>FUNCTION IN STABILIZATION OF DNA DAMAGE</scope>
</reference>
<reference key="6">
    <citation type="journal article" date="2007" name="Cell Cycle">
        <title>The yeast Slx5-Slx8 DNA integrity complex displays ubiquitin ligase activity.</title>
        <authorList>
            <person name="Ii T."/>
            <person name="Fung J."/>
            <person name="Mullen J.R."/>
            <person name="Brill S.J."/>
        </authorList>
    </citation>
    <scope>UBIQUITIN-PROTEIN LIGASE ACTIVITY</scope>
    <scope>FUNCTION IN STIMULATION OF UBIQUITIN CONJUGASTING ENZYMES</scope>
    <scope>INTERACTION WITH SLX5/HEX3</scope>
</reference>
<reference key="7">
    <citation type="journal article" date="2007" name="DNA Repair">
        <title>Stimulation of in vitro sumoylation by Slx5-Slx8: evidence for a functional interaction with the SUMO pathway.</title>
        <authorList>
            <person name="Ii T."/>
            <person name="Mullen J.R."/>
            <person name="Slagle C.E."/>
            <person name="Brill S.J."/>
        </authorList>
    </citation>
    <scope>FUNCTION IN DEGRADATION OF SUMOYLATED PROTEINS</scope>
    <scope>INTERACTION WITH SLX5/HEX3</scope>
</reference>
<reference key="8">
    <citation type="journal article" date="2007" name="J. Biol. Chem.">
        <title>Ubiquitin-dependent proteolytic control of SUMO conjugates.</title>
        <authorList>
            <person name="Uzunova K."/>
            <person name="Goettsche K."/>
            <person name="Miteva M."/>
            <person name="Weisshaar S.R."/>
            <person name="Glanemann C."/>
            <person name="Schnellhardt M."/>
            <person name="Niessen M."/>
            <person name="Scheel H."/>
            <person name="Hofmann K."/>
            <person name="Johnson E.S."/>
            <person name="Praefcke G.J.K."/>
            <person name="Dohmen R.J."/>
        </authorList>
    </citation>
    <scope>FUNCTION IN DEGRADATION OF SUMOYLATED PROTEINS</scope>
    <scope>LIGASE ACTIVITY</scope>
    <scope>INTERACTION WITH SLX5</scope>
</reference>
<reference key="9">
    <citation type="journal article" date="2007" name="J. Biol. Chem.">
        <title>The yeast Hex3.Slx8 heterodimer is a ubiquitin ligase stimulated by substrate sumoylation.</title>
        <authorList>
            <person name="Xie Y."/>
            <person name="Kerscher O."/>
            <person name="Kroetz M.B."/>
            <person name="McConchie H.F."/>
            <person name="Sung P."/>
            <person name="Hochstrasser M."/>
        </authorList>
    </citation>
    <scope>FUNCTION IN DEGRADATION OF SUMOYLATED PROTEINS</scope>
    <scope>LIGASE ACTIVITY</scope>
    <scope>INTERACTION WITH SLX5</scope>
</reference>
<reference key="10">
    <citation type="journal article" date="2007" name="J. Proteome Res.">
        <title>Large-scale phosphorylation analysis of alpha-factor-arrested Saccharomyces cerevisiae.</title>
        <authorList>
            <person name="Li X."/>
            <person name="Gerber S.A."/>
            <person name="Rudner A.D."/>
            <person name="Beausoleil S.A."/>
            <person name="Haas W."/>
            <person name="Villen J."/>
            <person name="Elias J.E."/>
            <person name="Gygi S.P."/>
        </authorList>
    </citation>
    <scope>PHOSPHORYLATION [LARGE SCALE ANALYSIS] AT SER-50; THR-66 AND SER-67</scope>
    <scope>IDENTIFICATION BY MASS SPECTROMETRY [LARGE SCALE ANALYSIS]</scope>
    <source>
        <strain>ADR376</strain>
    </source>
</reference>
<reference key="11">
    <citation type="journal article" date="2007" name="Mol. Cell. Biol.">
        <title>The Slx5-Slx8 complex affects sumoylation of DNA repair proteins and negatively regulates recombination.</title>
        <authorList>
            <person name="Burgess R.C."/>
            <person name="Rahman S."/>
            <person name="Lisby M."/>
            <person name="Rothstein R."/>
            <person name="Zhao X."/>
        </authorList>
    </citation>
    <scope>FUNCTION IN NEGATIVE REGULATION OF RECOMBINATION</scope>
    <scope>SUBCELLULAR LOCATION</scope>
</reference>
<reference key="12">
    <citation type="journal article" date="2008" name="Genetics">
        <title>A genetic screen for increased loss of heterozygosity in Saccharomyces cerevisiae.</title>
        <authorList>
            <person name="Andersen M.P."/>
            <person name="Nelson Z.W."/>
            <person name="Hetrick E.D."/>
            <person name="Gottschling D.E."/>
        </authorList>
    </citation>
    <scope>DELETION ANALYSIS</scope>
</reference>
<reference key="13">
    <citation type="journal article" date="2008" name="J. Biol. Chem.">
        <title>Activation of the Slx5-Slx8 ubiquitin ligase by poly-small ubiquitin-like modifier conjugates.</title>
        <authorList>
            <person name="Mullen J.R."/>
            <person name="Brill S.J."/>
        </authorList>
    </citation>
    <scope>FUNCTION IN DEGRADATION OF SUMOYLATED PROTEINS</scope>
</reference>
<reference key="14">
    <citation type="journal article" date="2008" name="Mol. Cell. Proteomics">
        <title>A multidimensional chromatography technology for in-depth phosphoproteome analysis.</title>
        <authorList>
            <person name="Albuquerque C.P."/>
            <person name="Smolka M.B."/>
            <person name="Payne S.H."/>
            <person name="Bafna V."/>
            <person name="Eng J."/>
            <person name="Zhou H."/>
        </authorList>
    </citation>
    <scope>PHOSPHORYLATION [LARGE SCALE ANALYSIS] AT SER-50</scope>
    <scope>IDENTIFICATION BY MASS SPECTROMETRY [LARGE SCALE ANALYSIS]</scope>
</reference>
<reference key="15">
    <citation type="journal article" date="2008" name="Science">
        <title>Functional targeting of DNA damage to a nuclear pore-associated SUMO-dependent ubiquitin ligase.</title>
        <authorList>
            <person name="Nagai S."/>
            <person name="Dubrana K."/>
            <person name="Tsai-Pflugfelder M."/>
            <person name="Davidson M.B."/>
            <person name="Roberts T.M."/>
            <person name="Brown G.W."/>
            <person name="Varela E."/>
            <person name="Hediger F."/>
            <person name="Gasser S.M."/>
            <person name="Krogan N.J."/>
        </authorList>
    </citation>
    <scope>FUNCTION IN DEGRADATION OF SUMOYLATED PROTEINS</scope>
    <scope>INTERACTION WITH SLX5/HEX3</scope>
    <scope>SUBCELLULAR LOCATION</scope>
</reference>
<reference key="16">
    <citation type="journal article" date="2009" name="Science">
        <title>Global analysis of Cdk1 substrate phosphorylation sites provides insights into evolution.</title>
        <authorList>
            <person name="Holt L.J."/>
            <person name="Tuch B.B."/>
            <person name="Villen J."/>
            <person name="Johnson A.D."/>
            <person name="Gygi S.P."/>
            <person name="Morgan D.O."/>
        </authorList>
    </citation>
    <scope>PHOSPHORYLATION [LARGE SCALE ANALYSIS] AT SER-50; THR-66 AND SER-67</scope>
    <scope>IDENTIFICATION BY MASS SPECTROMETRY [LARGE SCALE ANALYSIS]</scope>
</reference>
<reference key="17">
    <citation type="journal article" date="2013" name="PLoS ONE">
        <title>Centromere binding and a conserved role in chromosome stability for SUMO-dependent ubiquitin ligases.</title>
        <authorList>
            <person name="van de Pasch L.A."/>
            <person name="Miles A.J."/>
            <person name="Nijenhuis W."/>
            <person name="Brabers N.A."/>
            <person name="van Leenen D."/>
            <person name="Lijnzaad P."/>
            <person name="Brown M.K."/>
            <person name="Ouellet J."/>
            <person name="Barral Y."/>
            <person name="Kops G.J."/>
            <person name="Holstege F.C."/>
        </authorList>
    </citation>
    <scope>FUNCTION</scope>
</reference>
<reference key="18">
    <citation type="journal article" date="2016" name="Dev. Cell">
        <title>Regulation of a spindle positioning factor at kinetochores by SUMO-targeted ubiquitin ligases.</title>
        <authorList>
            <person name="Schweiggert J."/>
            <person name="Stevermann L."/>
            <person name="Panigada D."/>
            <person name="Kammerer D."/>
            <person name="Liakopoulos D."/>
        </authorList>
    </citation>
    <scope>FUNCTION</scope>
    <scope>INTERACTION WITH KAR9</scope>
    <scope>SUBCELLULAR LOCATION</scope>
</reference>
<reference key="19">
    <citation type="journal article" date="2016" name="Mol. Biol. Cell">
        <title>SUMO-targeted ubiquitin ligase (STUbL) Slx5 regulates proteolysis of centromeric histone H3 variant Cse4 and prevents its mislocalization to euchromatin.</title>
        <authorList>
            <person name="Ohkuni K."/>
            <person name="Takahashi Y."/>
            <person name="Fulp A."/>
            <person name="Lawrimore J."/>
            <person name="Au W.C."/>
            <person name="Pasupala N."/>
            <person name="Levy-Myers R."/>
            <person name="Warren J."/>
            <person name="Strunnikov A."/>
            <person name="Baker R.E."/>
            <person name="Kerscher O."/>
            <person name="Bloom K."/>
            <person name="Basrai M.A."/>
        </authorList>
    </citation>
    <scope>FUNCTION</scope>
    <scope>SUBCELLULAR LOCATION</scope>
</reference>
<reference key="20">
    <citation type="journal article" date="2018" name="Nat. Commun.">
        <title>Slx5-Slx8 ubiquitin ligase targets active pools of the Yen1 nuclease to limit crossover formation.</title>
        <authorList>
            <person name="Talhaoui I."/>
            <person name="Bernal M."/>
            <person name="Mullen J.R."/>
            <person name="Dorison H."/>
            <person name="Palancade B."/>
            <person name="Brill S.J."/>
            <person name="Mazon G."/>
        </authorList>
    </citation>
    <scope>FUNCTION</scope>
    <scope>DISRUPTION PHENOTYPE</scope>
</reference>
<reference key="21">
    <citation type="journal article" date="2019" name="EMBO J.">
        <title>Slx5/Slx8-dependent ubiquitin hotspots on chromatin contribute to stress tolerance.</title>
        <authorList>
            <person name="Hoepfler M."/>
            <person name="Kern M.J."/>
            <person name="Straub T."/>
            <person name="Prytuliak R."/>
            <person name="Habermann B.H."/>
            <person name="Pfander B."/>
            <person name="Jentsch S."/>
        </authorList>
    </citation>
    <scope>FUNCTION</scope>
    <scope>SUBCELLULAR LOCATION</scope>
    <scope>DNA-BINDING</scope>
    <scope>DISRUPTION PHENOTYPE</scope>
    <scope>DOMAIN</scope>
</reference>
<gene>
    <name type="primary">SLX8</name>
    <name type="ordered locus">YER116C</name>
</gene>
<sequence length="274" mass="30764">MARRPDNQNPEGENLRIKRVRLESVRQNDEEEENEVSRTQNIVTDNRHDSPEAVVEIIGERALENTSEEDGDDDLSLFRALEEDPGSDHNTSNNDSGNHDRETMHTEEPEASSGNNITLTNNVEELHTMDVLSQTANTPSASPMLDAAPPTTKPGTNSKEQTVDLTADAIDLDAEEQQVLQISDDDFQEETKEAPKEYGAAKDYRCPICFEPPETALMTLCGHVFCCPCLFQMVNSSRTCRQFGHCALCRSKVYLKDVRLIILRKKQVKKKVKS</sequence>
<accession>P40072</accession>
<accession>D3DM22</accession>
<dbReference type="EC" id="2.3.2.27" evidence="9"/>
<dbReference type="EMBL" id="U18916">
    <property type="protein sequence ID" value="AAC03214.1"/>
    <property type="molecule type" value="Genomic_DNA"/>
</dbReference>
<dbReference type="EMBL" id="BK006939">
    <property type="protein sequence ID" value="DAA07776.1"/>
    <property type="molecule type" value="Genomic_DNA"/>
</dbReference>
<dbReference type="PIR" id="S50619">
    <property type="entry name" value="S50619"/>
</dbReference>
<dbReference type="RefSeq" id="NP_011041.3">
    <property type="nucleotide sequence ID" value="NM_001179006.3"/>
</dbReference>
<dbReference type="SMR" id="P40072"/>
<dbReference type="BioGRID" id="36861">
    <property type="interactions" value="525"/>
</dbReference>
<dbReference type="ComplexPortal" id="CPX-3179">
    <property type="entry name" value="Slx5-Slx8 SUMO-targeted ubiquitin ligase (STUbL) complex"/>
</dbReference>
<dbReference type="DIP" id="DIP-1365N"/>
<dbReference type="FunCoup" id="P40072">
    <property type="interactions" value="212"/>
</dbReference>
<dbReference type="IntAct" id="P40072">
    <property type="interactions" value="5"/>
</dbReference>
<dbReference type="MINT" id="P40072"/>
<dbReference type="STRING" id="4932.YER116C"/>
<dbReference type="iPTMnet" id="P40072"/>
<dbReference type="PaxDb" id="4932-YER116C"/>
<dbReference type="PeptideAtlas" id="P40072"/>
<dbReference type="EnsemblFungi" id="YER116C_mRNA">
    <property type="protein sequence ID" value="YER116C"/>
    <property type="gene ID" value="YER116C"/>
</dbReference>
<dbReference type="GeneID" id="856852"/>
<dbReference type="KEGG" id="sce:YER116C"/>
<dbReference type="AGR" id="SGD:S000000918"/>
<dbReference type="SGD" id="S000000918">
    <property type="gene designation" value="SLX8"/>
</dbReference>
<dbReference type="VEuPathDB" id="FungiDB:YER116C"/>
<dbReference type="eggNOG" id="KOG2164">
    <property type="taxonomic scope" value="Eukaryota"/>
</dbReference>
<dbReference type="HOGENOM" id="CLU_081643_0_0_1"/>
<dbReference type="InParanoid" id="P40072"/>
<dbReference type="OMA" id="XLENTSE"/>
<dbReference type="OrthoDB" id="6270329at2759"/>
<dbReference type="BioCyc" id="YEAST:G3O-30280-MONOMER"/>
<dbReference type="UniPathway" id="UPA00143"/>
<dbReference type="BioGRID-ORCS" id="856852">
    <property type="hits" value="3 hits in 10 CRISPR screens"/>
</dbReference>
<dbReference type="PRO" id="PR:P40072"/>
<dbReference type="Proteomes" id="UP000002311">
    <property type="component" value="Chromosome V"/>
</dbReference>
<dbReference type="RNAct" id="P40072">
    <property type="molecule type" value="protein"/>
</dbReference>
<dbReference type="GO" id="GO:0005737">
    <property type="term" value="C:cytoplasm"/>
    <property type="evidence" value="ECO:0007005"/>
    <property type="project" value="SGD"/>
</dbReference>
<dbReference type="GO" id="GO:0000776">
    <property type="term" value="C:kinetochore"/>
    <property type="evidence" value="ECO:0000314"/>
    <property type="project" value="SGD"/>
</dbReference>
<dbReference type="GO" id="GO:0005634">
    <property type="term" value="C:nucleus"/>
    <property type="evidence" value="ECO:0000314"/>
    <property type="project" value="ComplexPortal"/>
</dbReference>
<dbReference type="GO" id="GO:0033768">
    <property type="term" value="C:SUMO-targeted ubiquitin ligase complex"/>
    <property type="evidence" value="ECO:0000314"/>
    <property type="project" value="SGD"/>
</dbReference>
<dbReference type="GO" id="GO:0061630">
    <property type="term" value="F:ubiquitin protein ligase activity"/>
    <property type="evidence" value="ECO:0007669"/>
    <property type="project" value="InterPro"/>
</dbReference>
<dbReference type="GO" id="GO:0004842">
    <property type="term" value="F:ubiquitin-protein transferase activity"/>
    <property type="evidence" value="ECO:0000314"/>
    <property type="project" value="SGD"/>
</dbReference>
<dbReference type="GO" id="GO:0008270">
    <property type="term" value="F:zinc ion binding"/>
    <property type="evidence" value="ECO:0007669"/>
    <property type="project" value="UniProtKB-KW"/>
</dbReference>
<dbReference type="GO" id="GO:0006974">
    <property type="term" value="P:DNA damage response"/>
    <property type="evidence" value="ECO:0000315"/>
    <property type="project" value="SGD"/>
</dbReference>
<dbReference type="GO" id="GO:0006281">
    <property type="term" value="P:DNA repair"/>
    <property type="evidence" value="ECO:0007669"/>
    <property type="project" value="UniProtKB-KW"/>
</dbReference>
<dbReference type="GO" id="GO:0016925">
    <property type="term" value="P:protein sumoylation"/>
    <property type="evidence" value="ECO:0000315"/>
    <property type="project" value="SGD"/>
</dbReference>
<dbReference type="GO" id="GO:0016567">
    <property type="term" value="P:protein ubiquitination"/>
    <property type="evidence" value="ECO:0000314"/>
    <property type="project" value="SGD"/>
</dbReference>
<dbReference type="GO" id="GO:0000723">
    <property type="term" value="P:telomere maintenance"/>
    <property type="evidence" value="ECO:0000315"/>
    <property type="project" value="SGD"/>
</dbReference>
<dbReference type="CDD" id="cd23142">
    <property type="entry name" value="RING-HC_CHR27-like"/>
    <property type="match status" value="1"/>
</dbReference>
<dbReference type="Gene3D" id="3.30.40.10">
    <property type="entry name" value="Zinc/RING finger domain, C3HC4 (zinc finger)"/>
    <property type="match status" value="1"/>
</dbReference>
<dbReference type="InterPro" id="IPR049627">
    <property type="entry name" value="SLX8"/>
</dbReference>
<dbReference type="InterPro" id="IPR018957">
    <property type="entry name" value="Znf_C3HC4_RING-type"/>
</dbReference>
<dbReference type="InterPro" id="IPR001841">
    <property type="entry name" value="Znf_RING"/>
</dbReference>
<dbReference type="InterPro" id="IPR013083">
    <property type="entry name" value="Znf_RING/FYVE/PHD"/>
</dbReference>
<dbReference type="InterPro" id="IPR017907">
    <property type="entry name" value="Znf_RING_CS"/>
</dbReference>
<dbReference type="PANTHER" id="PTHR47094">
    <property type="entry name" value="ELFLESS, ISOFORM B"/>
    <property type="match status" value="1"/>
</dbReference>
<dbReference type="PANTHER" id="PTHR47094:SF1">
    <property type="entry name" value="RING-TYPE E3 UBIQUITIN TRANSFERASE"/>
    <property type="match status" value="1"/>
</dbReference>
<dbReference type="Pfam" id="PF00097">
    <property type="entry name" value="zf-C3HC4"/>
    <property type="match status" value="1"/>
</dbReference>
<dbReference type="SMART" id="SM00184">
    <property type="entry name" value="RING"/>
    <property type="match status" value="1"/>
</dbReference>
<dbReference type="SUPFAM" id="SSF57850">
    <property type="entry name" value="RING/U-box"/>
    <property type="match status" value="1"/>
</dbReference>
<dbReference type="PROSITE" id="PS00518">
    <property type="entry name" value="ZF_RING_1"/>
    <property type="match status" value="1"/>
</dbReference>
<dbReference type="PROSITE" id="PS50089">
    <property type="entry name" value="ZF_RING_2"/>
    <property type="match status" value="1"/>
</dbReference>
<keyword id="KW-0137">Centromere</keyword>
<keyword id="KW-0158">Chromosome</keyword>
<keyword id="KW-0227">DNA damage</keyword>
<keyword id="KW-0234">DNA repair</keyword>
<keyword id="KW-0995">Kinetochore</keyword>
<keyword id="KW-0479">Metal-binding</keyword>
<keyword id="KW-0539">Nucleus</keyword>
<keyword id="KW-0597">Phosphoprotein</keyword>
<keyword id="KW-1185">Reference proteome</keyword>
<keyword id="KW-0808">Transferase</keyword>
<keyword id="KW-0833">Ubl conjugation pathway</keyword>
<keyword id="KW-0862">Zinc</keyword>
<keyword id="KW-0863">Zinc-finger</keyword>
<comment type="function">
    <text evidence="3 4 5 6 8 9 10 11 12 13 14 15 16">Component of the SUMO-targeted ubiquitin ligase (STUbL) complex SLX5/SLX8 that mediates ubiquitination and subsequent desumoylation of sumoylated proteins and proteins containing SUMO-like domains for their degradation (PubMed:11139495, PubMed:16325482, PubMed:17669696, PubMed:17848550, PubMed:18032921, PubMed:18499666, PubMed:18948542, PubMed:31015336). The STUbL complex SLX5/SLX8 stimulates ubiquitin conjugating enzymes, including UBC1, UBC4, UBC5 and UBC13-MMS2, and mediates the proteolytic down-regulation of sumoylated proteins (PubMed:18032921). The STUbL complex SLX5/SLX8 is involved in ubiquitin-mediated degradation of histone variant CSE4, preventing mislocalization to euchromatin (PubMed:26960795). The complex plays an essential role in maintenance of chromosome stability and links SUMO-dependent ubiquitination to a centromere-specific function during mitosis (PubMed:23785440). The complex is involved in proteolysis of spindle positioning protein KAR9 and ensures correct spindle function by regulating levels of microtubule-associated proteins (PubMed:26906737). During replication, the complex helps to prevent DNA lesions via recombination and has a role in localizing the DNA damage protein DCD2 (PubMed:16325482, PubMed:17591698). The complex especially ubiquitinates the nuclease YEN1 and prevents persistent accumulation of a fraction of YEN1 associated with sites of activity in late G2/M and helps maintain the balance between pro- and anti-crossover pathways during homologous recombination (PubMed:30479332). It is also involved in ubiquitin-mediated degradation of DNA repair proteins RAD52 and RAD57 (PubMed:18032921). Finally, the complex is recruited to distinct genomic hotspots of non-H2B protein ubiquitination (ub-hotspots) by the sumoylated transcription factor-like protein EUC1 where it ubiquitinates EUC1 and presumably other targets (PubMed:31015336).</text>
</comment>
<comment type="catalytic activity">
    <reaction evidence="9">
        <text>S-ubiquitinyl-[E2 ubiquitin-conjugating enzyme]-L-cysteine + [acceptor protein]-L-lysine = [E2 ubiquitin-conjugating enzyme]-L-cysteine + N(6)-ubiquitinyl-[acceptor protein]-L-lysine.</text>
        <dbReference type="EC" id="2.3.2.27"/>
    </reaction>
</comment>
<comment type="pathway">
    <text>Protein modification; protein ubiquitination.</text>
</comment>
<comment type="subunit">
    <text evidence="3 6 7 8 9 11">Component of the heterodimeric SUMO-targeted ubiquitin ligase (STUbL) complex composed of SLX5 and SLX8.</text>
</comment>
<comment type="interaction">
    <interactant intactId="EBI-22661">
        <id>P40072</id>
    </interactant>
    <interactant intactId="EBI-8276">
        <id>P32828</id>
        <label>SLX5</label>
    </interactant>
    <organismsDiffer>false</organismsDiffer>
    <experiments>3</experiments>
</comment>
<comment type="subcellular location">
    <subcellularLocation>
        <location evidence="5 11">Nucleus</location>
    </subcellularLocation>
    <subcellularLocation>
        <location evidence="13">Chromosome</location>
        <location evidence="13">Centromere</location>
        <location evidence="13">Kinetochore</location>
    </subcellularLocation>
    <text evidence="16">Localizes to few distinct genomic hotspots of non-H2B protein ubiquitination (ub-hotspots).</text>
</comment>
<comment type="disruption phenotype">
    <text evidence="15">Leads to the persistence of YEN1 foci.</text>
</comment>
<evidence type="ECO:0000255" key="1">
    <source>
        <dbReference type="PROSITE-ProRule" id="PRU00175"/>
    </source>
</evidence>
<evidence type="ECO:0000256" key="2">
    <source>
        <dbReference type="SAM" id="MobiDB-lite"/>
    </source>
</evidence>
<evidence type="ECO:0000269" key="3">
    <source>
    </source>
</evidence>
<evidence type="ECO:0000269" key="4">
    <source>
    </source>
</evidence>
<evidence type="ECO:0000269" key="5">
    <source>
    </source>
</evidence>
<evidence type="ECO:0000269" key="6">
    <source>
    </source>
</evidence>
<evidence type="ECO:0000269" key="7">
    <source>
    </source>
</evidence>
<evidence type="ECO:0000269" key="8">
    <source>
    </source>
</evidence>
<evidence type="ECO:0000269" key="9">
    <source>
    </source>
</evidence>
<evidence type="ECO:0000269" key="10">
    <source>
    </source>
</evidence>
<evidence type="ECO:0000269" key="11">
    <source>
    </source>
</evidence>
<evidence type="ECO:0000269" key="12">
    <source>
    </source>
</evidence>
<evidence type="ECO:0000269" key="13">
    <source>
    </source>
</evidence>
<evidence type="ECO:0000269" key="14">
    <source>
    </source>
</evidence>
<evidence type="ECO:0000269" key="15">
    <source>
    </source>
</evidence>
<evidence type="ECO:0000269" key="16">
    <source>
    </source>
</evidence>
<evidence type="ECO:0000305" key="17"/>
<evidence type="ECO:0007744" key="18">
    <source>
    </source>
</evidence>
<evidence type="ECO:0007744" key="19">
    <source>
    </source>
</evidence>
<evidence type="ECO:0007744" key="20">
    <source>
    </source>
</evidence>
<proteinExistence type="evidence at protein level"/>
<name>SLX8_YEAST</name>
<organism>
    <name type="scientific">Saccharomyces cerevisiae (strain ATCC 204508 / S288c)</name>
    <name type="common">Baker's yeast</name>
    <dbReference type="NCBI Taxonomy" id="559292"/>
    <lineage>
        <taxon>Eukaryota</taxon>
        <taxon>Fungi</taxon>
        <taxon>Dikarya</taxon>
        <taxon>Ascomycota</taxon>
        <taxon>Saccharomycotina</taxon>
        <taxon>Saccharomycetes</taxon>
        <taxon>Saccharomycetales</taxon>
        <taxon>Saccharomycetaceae</taxon>
        <taxon>Saccharomyces</taxon>
    </lineage>
</organism>
<feature type="chain" id="PRO_0000056336" description="E3 ubiquitin-protein ligase complex SLX5-SLX8 subunit SLX8">
    <location>
        <begin position="1"/>
        <end position="274"/>
    </location>
</feature>
<feature type="zinc finger region" description="RING-type" evidence="1">
    <location>
        <begin position="206"/>
        <end position="250"/>
    </location>
</feature>
<feature type="region of interest" description="Disordered" evidence="2">
    <location>
        <begin position="1"/>
        <end position="117"/>
    </location>
</feature>
<feature type="region of interest" description="Disordered" evidence="2">
    <location>
        <begin position="136"/>
        <end position="159"/>
    </location>
</feature>
<feature type="compositionally biased region" description="Basic and acidic residues" evidence="2">
    <location>
        <begin position="13"/>
        <end position="28"/>
    </location>
</feature>
<feature type="compositionally biased region" description="Acidic residues" evidence="2">
    <location>
        <begin position="66"/>
        <end position="75"/>
    </location>
</feature>
<feature type="compositionally biased region" description="Basic and acidic residues" evidence="2">
    <location>
        <begin position="97"/>
        <end position="108"/>
    </location>
</feature>
<feature type="modified residue" description="Phosphoserine" evidence="18 19 20">
    <location>
        <position position="50"/>
    </location>
</feature>
<feature type="modified residue" description="Phosphothreonine" evidence="18 20">
    <location>
        <position position="66"/>
    </location>
</feature>
<feature type="modified residue" description="Phosphoserine" evidence="18 20">
    <location>
        <position position="67"/>
    </location>
</feature>